<evidence type="ECO:0000255" key="1">
    <source>
        <dbReference type="HAMAP-Rule" id="MF_01577"/>
    </source>
</evidence>
<protein>
    <recommendedName>
        <fullName evidence="1">Putative multidrug resistance protein MdtD</fullName>
    </recommendedName>
</protein>
<proteinExistence type="inferred from homology"/>
<organism>
    <name type="scientific">Escherichia coli O157:H7 (strain EC4115 / EHEC)</name>
    <dbReference type="NCBI Taxonomy" id="444450"/>
    <lineage>
        <taxon>Bacteria</taxon>
        <taxon>Pseudomonadati</taxon>
        <taxon>Pseudomonadota</taxon>
        <taxon>Gammaproteobacteria</taxon>
        <taxon>Enterobacterales</taxon>
        <taxon>Enterobacteriaceae</taxon>
        <taxon>Escherichia</taxon>
    </lineage>
</organism>
<sequence>MTDLPDSTRWQLWIVAFGFFMQSLDTTIVNTALPSMAQSLGESPLHMHMVIVSYVLTVAVMLPASGWLADKVGVRNIFFTAIVLFTLGSLFCALSGTLNELLLARALQGVGGAMMVPVGRLTVMKIVPREQYMAAMTFVTLPGQVGPLLGPALGGLLVEYASWHWIFLINIPVGIIGAIATLMLMPNYTMQTRRFDLSGFLLLAVGMAVLTLALDGSKGTGLSPLAITGLVAVGVVALVLYLLHARNNNRALFSLKLFRTRTFSLGLAGSFAGRIGSGMLPFMTPVFLQIGLGFSPFHAGLMMIPMVLGSMGMKRIVVQVVNRFGYRRVLVATTLGLSLVTLLFMTTALLGWYYVLPFVLFLQGMVNSTRFSSMNTLTLKDLPDNLASSGNSLLSMIMQLSMSIGVTIAGLLLGLFGSQHVSVDSSTTQTVFMYTWLSMAFIIALPAFIFARVPNDTHQNVAISRRKRSAQ</sequence>
<gene>
    <name evidence="1" type="primary">mdtD</name>
    <name type="ordered locus">ECH74115_3017</name>
</gene>
<dbReference type="EMBL" id="CP001164">
    <property type="protein sequence ID" value="ACI38732.1"/>
    <property type="molecule type" value="Genomic_DNA"/>
</dbReference>
<dbReference type="RefSeq" id="WP_000130888.1">
    <property type="nucleotide sequence ID" value="NC_011353.1"/>
</dbReference>
<dbReference type="SMR" id="B5YUD5"/>
<dbReference type="KEGG" id="ecf:ECH74115_3017"/>
<dbReference type="HOGENOM" id="CLU_000960_28_0_6"/>
<dbReference type="GO" id="GO:0005886">
    <property type="term" value="C:plasma membrane"/>
    <property type="evidence" value="ECO:0007669"/>
    <property type="project" value="UniProtKB-SubCell"/>
</dbReference>
<dbReference type="GO" id="GO:0022857">
    <property type="term" value="F:transmembrane transporter activity"/>
    <property type="evidence" value="ECO:0007669"/>
    <property type="project" value="UniProtKB-UniRule"/>
</dbReference>
<dbReference type="CDD" id="cd17503">
    <property type="entry name" value="MFS_LmrB_MDR_like"/>
    <property type="match status" value="1"/>
</dbReference>
<dbReference type="FunFam" id="1.20.1250.20:FF:000021">
    <property type="entry name" value="Putative multidrug resistance protein MdtD"/>
    <property type="match status" value="1"/>
</dbReference>
<dbReference type="FunFam" id="1.20.1720.10:FF:000001">
    <property type="entry name" value="Putative multidrug resistance protein MdtD"/>
    <property type="match status" value="1"/>
</dbReference>
<dbReference type="Gene3D" id="1.20.1250.20">
    <property type="entry name" value="MFS general substrate transporter like domains"/>
    <property type="match status" value="1"/>
</dbReference>
<dbReference type="Gene3D" id="1.20.1720.10">
    <property type="entry name" value="Multidrug resistance protein D"/>
    <property type="match status" value="1"/>
</dbReference>
<dbReference type="HAMAP" id="MF_01577">
    <property type="entry name" value="MFS_MdtD"/>
    <property type="match status" value="1"/>
</dbReference>
<dbReference type="InterPro" id="IPR004638">
    <property type="entry name" value="EmrB-like"/>
</dbReference>
<dbReference type="InterPro" id="IPR011701">
    <property type="entry name" value="MFS"/>
</dbReference>
<dbReference type="InterPro" id="IPR020846">
    <property type="entry name" value="MFS_dom"/>
</dbReference>
<dbReference type="InterPro" id="IPR036259">
    <property type="entry name" value="MFS_trans_sf"/>
</dbReference>
<dbReference type="InterPro" id="IPR023721">
    <property type="entry name" value="Multi-R_MdtD"/>
</dbReference>
<dbReference type="NCBIfam" id="TIGR00711">
    <property type="entry name" value="efflux_EmrB"/>
    <property type="match status" value="1"/>
</dbReference>
<dbReference type="NCBIfam" id="NF007799">
    <property type="entry name" value="PRK10504.1"/>
    <property type="match status" value="1"/>
</dbReference>
<dbReference type="PANTHER" id="PTHR42718:SF46">
    <property type="entry name" value="BLR6921 PROTEIN"/>
    <property type="match status" value="1"/>
</dbReference>
<dbReference type="PANTHER" id="PTHR42718">
    <property type="entry name" value="MAJOR FACILITATOR SUPERFAMILY MULTIDRUG TRANSPORTER MFSC"/>
    <property type="match status" value="1"/>
</dbReference>
<dbReference type="Pfam" id="PF07690">
    <property type="entry name" value="MFS_1"/>
    <property type="match status" value="1"/>
</dbReference>
<dbReference type="PRINTS" id="PR01036">
    <property type="entry name" value="TCRTETB"/>
</dbReference>
<dbReference type="SUPFAM" id="SSF103473">
    <property type="entry name" value="MFS general substrate transporter"/>
    <property type="match status" value="1"/>
</dbReference>
<dbReference type="PROSITE" id="PS50850">
    <property type="entry name" value="MFS"/>
    <property type="match status" value="1"/>
</dbReference>
<name>MDTD_ECO5E</name>
<reference key="1">
    <citation type="journal article" date="2011" name="Proc. Natl. Acad. Sci. U.S.A.">
        <title>Genomic anatomy of Escherichia coli O157:H7 outbreaks.</title>
        <authorList>
            <person name="Eppinger M."/>
            <person name="Mammel M.K."/>
            <person name="Leclerc J.E."/>
            <person name="Ravel J."/>
            <person name="Cebula T.A."/>
        </authorList>
    </citation>
    <scope>NUCLEOTIDE SEQUENCE [LARGE SCALE GENOMIC DNA]</scope>
    <source>
        <strain>EC4115 / EHEC</strain>
    </source>
</reference>
<comment type="subcellular location">
    <subcellularLocation>
        <location evidence="1">Cell inner membrane</location>
        <topology evidence="1">Multi-pass membrane protein</topology>
    </subcellularLocation>
</comment>
<comment type="similarity">
    <text evidence="1">Belongs to the major facilitator superfamily. TCR/Tet family.</text>
</comment>
<feature type="chain" id="PRO_0000365281" description="Putative multidrug resistance protein MdtD">
    <location>
        <begin position="1"/>
        <end position="471"/>
    </location>
</feature>
<feature type="topological domain" description="Periplasmic" evidence="1">
    <location>
        <begin position="1"/>
        <end position="11"/>
    </location>
</feature>
<feature type="transmembrane region" description="Helical" evidence="1">
    <location>
        <begin position="12"/>
        <end position="32"/>
    </location>
</feature>
<feature type="topological domain" description="Cytoplasmic" evidence="1">
    <location>
        <begin position="33"/>
        <end position="48"/>
    </location>
</feature>
<feature type="transmembrane region" description="Helical" evidence="1">
    <location>
        <begin position="49"/>
        <end position="69"/>
    </location>
</feature>
<feature type="topological domain" description="Periplasmic" evidence="1">
    <location>
        <begin position="70"/>
        <end position="76"/>
    </location>
</feature>
<feature type="transmembrane region" description="Helical" evidence="1">
    <location>
        <begin position="77"/>
        <end position="97"/>
    </location>
</feature>
<feature type="topological domain" description="Cytoplasmic" evidence="1">
    <location>
        <begin position="98"/>
        <end position="101"/>
    </location>
</feature>
<feature type="transmembrane region" description="Helical" evidence="1">
    <location>
        <begin position="102"/>
        <end position="124"/>
    </location>
</feature>
<feature type="topological domain" description="Periplasmic" evidence="1">
    <location>
        <begin position="125"/>
        <end position="137"/>
    </location>
</feature>
<feature type="transmembrane region" description="Helical" evidence="1">
    <location>
        <begin position="138"/>
        <end position="158"/>
    </location>
</feature>
<feature type="topological domain" description="Cytoplasmic" evidence="1">
    <location>
        <begin position="159"/>
        <end position="164"/>
    </location>
</feature>
<feature type="transmembrane region" description="Helical" evidence="1">
    <location>
        <begin position="165"/>
        <end position="185"/>
    </location>
</feature>
<feature type="topological domain" description="Periplasmic" evidence="1">
    <location>
        <begin position="186"/>
        <end position="196"/>
    </location>
</feature>
<feature type="transmembrane region" description="Helical" evidence="1">
    <location>
        <begin position="197"/>
        <end position="217"/>
    </location>
</feature>
<feature type="topological domain" description="Cytoplasmic" evidence="1">
    <location>
        <begin position="218"/>
        <end position="224"/>
    </location>
</feature>
<feature type="transmembrane region" description="Helical" evidence="1">
    <location>
        <begin position="225"/>
        <end position="245"/>
    </location>
</feature>
<feature type="topological domain" description="Periplasmic" evidence="1">
    <location>
        <begin position="246"/>
        <end position="262"/>
    </location>
</feature>
<feature type="transmembrane region" description="Helical" evidence="1">
    <location>
        <begin position="263"/>
        <end position="283"/>
    </location>
</feature>
<feature type="topological domain" description="Cytoplasmic" evidence="1">
    <location>
        <begin position="284"/>
        <end position="285"/>
    </location>
</feature>
<feature type="transmembrane region" description="Helical" evidence="1">
    <location>
        <begin position="286"/>
        <end position="306"/>
    </location>
</feature>
<feature type="topological domain" description="Periplasmic" evidence="1">
    <location>
        <begin position="307"/>
        <end position="341"/>
    </location>
</feature>
<feature type="transmembrane region" description="Helical" evidence="1">
    <location>
        <begin position="342"/>
        <end position="362"/>
    </location>
</feature>
<feature type="topological domain" description="Cytoplasmic" evidence="1">
    <location>
        <begin position="363"/>
        <end position="395"/>
    </location>
</feature>
<feature type="transmembrane region" description="Helical" evidence="1">
    <location>
        <begin position="396"/>
        <end position="416"/>
    </location>
</feature>
<feature type="topological domain" description="Periplasmic" evidence="1">
    <location>
        <begin position="417"/>
        <end position="430"/>
    </location>
</feature>
<feature type="transmembrane region" description="Helical" evidence="1">
    <location>
        <begin position="431"/>
        <end position="451"/>
    </location>
</feature>
<feature type="topological domain" description="Cytoplasmic" evidence="1">
    <location>
        <begin position="452"/>
        <end position="471"/>
    </location>
</feature>
<accession>B5YUD5</accession>
<keyword id="KW-0997">Cell inner membrane</keyword>
<keyword id="KW-1003">Cell membrane</keyword>
<keyword id="KW-0472">Membrane</keyword>
<keyword id="KW-0812">Transmembrane</keyword>
<keyword id="KW-1133">Transmembrane helix</keyword>
<keyword id="KW-0813">Transport</keyword>